<keyword id="KW-0067">ATP-binding</keyword>
<keyword id="KW-0347">Helicase</keyword>
<keyword id="KW-0378">Hydrolase</keyword>
<keyword id="KW-0479">Metal-binding</keyword>
<keyword id="KW-0547">Nucleotide-binding</keyword>
<keyword id="KW-0539">Nucleus</keyword>
<keyword id="KW-1185">Reference proteome</keyword>
<keyword id="KW-0862">Zinc</keyword>
<keyword id="KW-0863">Zinc-finger</keyword>
<feature type="chain" id="PRO_0000310750" description="Uncharacterized ATP-dependent helicase C144.05">
    <location>
        <begin position="1"/>
        <end position="1375"/>
    </location>
</feature>
<feature type="domain" description="Helicase ATP-binding" evidence="2">
    <location>
        <begin position="277"/>
        <end position="476"/>
    </location>
</feature>
<feature type="domain" description="Helicase C-terminal" evidence="3">
    <location>
        <begin position="1190"/>
        <end position="1336"/>
    </location>
</feature>
<feature type="zinc finger region" description="RING-type" evidence="1">
    <location>
        <begin position="1092"/>
        <end position="1130"/>
    </location>
</feature>
<feature type="binding site" evidence="2">
    <location>
        <begin position="290"/>
        <end position="297"/>
    </location>
    <ligand>
        <name>ATP</name>
        <dbReference type="ChEBI" id="CHEBI:30616"/>
    </ligand>
</feature>
<sequence length="1375" mass="159952">MDRTKRRKIEKEASLLNERNNLLESDFANCYRAFQHQLKLDQQIWRGPEDELNRLKSTIYPVVFWVDGSEKLHAYSFTQRKISLAKNLIPLFSVDLNKDTYSALKAPLKIWSKLWEDNRRLKKIIKYTSYVTVKGSELILSFGISILDSFLAPQDAILSSGSSSSYTALLDYTFLPSEDEEYSCLDINTALFYDCARKLAKSLRFANVSRDPRLSSELLPFQMRVLEWMKRREEEKFLTSNDLPPLWYHCKSLFDDRMVYVNHVYGYMTFSKEKTYLLASGDIRGGILADEMGMGKTLEVLGLVLHHQLPISLTDTCTFDQVVGKNVKYSKATLIITPSTILDQWLSEIDLHVPSLKVFHYQGIRKSNGLKSAKIFLDCDIVVTSYSDLRFELLYTESHSRTLRHEKRHVSPKSPLIDVCWWRICVDEAQMVETSQSNVAQMIYRIPRVNCWTVSGTPVRSEVDDLFGLLFLLRYSPMYLYKKQAWMQIIEKKRVREFCDLFGSLVCRHSKQDVEEELKLPPQHRICMTTRLSVVEETNYQDLLSEAAKSLHFFKDRNLDLCDEESMRRWLVRLRQACCHPQVGFGNKSAFGGGPMKSINDVLVFMLEQTNSTFSSLNRKLYSDKIIVGQIYDHIKDYNKALAIWSEVRIPVELAVKELENVIYNSKYEDHGKNLPINYFGLDHFIHLRVWYVLLHKIYFFIASAYFSLKNEKFENEFYLLAQDLRRKIMSDVIIKTSKHLEEFSEKFIPKKLVKIPRLQKSYAKGLITGHGIIEDYNRLYKELNDQKEVLIKFRDRLIHLMKLPLLDQESDPTGDEYEESLNAQSEISYCIDVYRQMLSDRVAAVSGTINTFVSHETELEKYKLIESIKKSEKSLDKQAEERDKKYLLYFEEREEARPKADQYGSLINIVSRLLDASNRSTSSFETSKNMEEYERIDAMAKEQSRICQKLEKELSIIQLTYNSRIEYYKQLQEISDSLMPPPVSNISLNNYVKDDEKKQKFLNSVIIKASVILEKEISEKQDEASQTTNVAELVNQKISEMNIPGHIHLLRELEEEKSNTQRKIAHFESRRRYLTNLYEHIVLKAESHQICIICRDIIKQGFITTCGHLYCSFCLEAWLKHSSSCPMCKTKLNKNNAYYIGESRDIYSRQEFVTGFNKRDERLEILDDEAYRQISNMELKESFGSKIDTISKHLLYLKHNELYPKVVVFSQWLDVLDVLHKSFEANGIVFIRFDGKSKNTCLKRFKEERSLQVLTLHARSQSSGLTLTNATHVFMCEPLLNSGIEMQAISRVHRIGQTRPTFVYYYIVEDTVEGHILNLSLTKHEQLDKLGLDVPLVGNINRTTEASSGGEQVDAAEIKDCLKMALKRLTTEDS</sequence>
<name>YIV5_SCHPO</name>
<organism>
    <name type="scientific">Schizosaccharomyces pombe (strain 972 / ATCC 24843)</name>
    <name type="common">Fission yeast</name>
    <dbReference type="NCBI Taxonomy" id="284812"/>
    <lineage>
        <taxon>Eukaryota</taxon>
        <taxon>Fungi</taxon>
        <taxon>Dikarya</taxon>
        <taxon>Ascomycota</taxon>
        <taxon>Taphrinomycotina</taxon>
        <taxon>Schizosaccharomycetes</taxon>
        <taxon>Schizosaccharomycetales</taxon>
        <taxon>Schizosaccharomycetaceae</taxon>
        <taxon>Schizosaccharomyces</taxon>
    </lineage>
</organism>
<accession>Q9UTL9</accession>
<proteinExistence type="inferred from homology"/>
<reference key="1">
    <citation type="journal article" date="2002" name="Nature">
        <title>The genome sequence of Schizosaccharomyces pombe.</title>
        <authorList>
            <person name="Wood V."/>
            <person name="Gwilliam R."/>
            <person name="Rajandream M.A."/>
            <person name="Lyne M.H."/>
            <person name="Lyne R."/>
            <person name="Stewart A."/>
            <person name="Sgouros J.G."/>
            <person name="Peat N."/>
            <person name="Hayles J."/>
            <person name="Baker S.G."/>
            <person name="Basham D."/>
            <person name="Bowman S."/>
            <person name="Brooks K."/>
            <person name="Brown D."/>
            <person name="Brown S."/>
            <person name="Chillingworth T."/>
            <person name="Churcher C.M."/>
            <person name="Collins M."/>
            <person name="Connor R."/>
            <person name="Cronin A."/>
            <person name="Davis P."/>
            <person name="Feltwell T."/>
            <person name="Fraser A."/>
            <person name="Gentles S."/>
            <person name="Goble A."/>
            <person name="Hamlin N."/>
            <person name="Harris D.E."/>
            <person name="Hidalgo J."/>
            <person name="Hodgson G."/>
            <person name="Holroyd S."/>
            <person name="Hornsby T."/>
            <person name="Howarth S."/>
            <person name="Huckle E.J."/>
            <person name="Hunt S."/>
            <person name="Jagels K."/>
            <person name="James K.D."/>
            <person name="Jones L."/>
            <person name="Jones M."/>
            <person name="Leather S."/>
            <person name="McDonald S."/>
            <person name="McLean J."/>
            <person name="Mooney P."/>
            <person name="Moule S."/>
            <person name="Mungall K.L."/>
            <person name="Murphy L.D."/>
            <person name="Niblett D."/>
            <person name="Odell C."/>
            <person name="Oliver K."/>
            <person name="O'Neil S."/>
            <person name="Pearson D."/>
            <person name="Quail M.A."/>
            <person name="Rabbinowitsch E."/>
            <person name="Rutherford K.M."/>
            <person name="Rutter S."/>
            <person name="Saunders D."/>
            <person name="Seeger K."/>
            <person name="Sharp S."/>
            <person name="Skelton J."/>
            <person name="Simmonds M.N."/>
            <person name="Squares R."/>
            <person name="Squares S."/>
            <person name="Stevens K."/>
            <person name="Taylor K."/>
            <person name="Taylor R.G."/>
            <person name="Tivey A."/>
            <person name="Walsh S.V."/>
            <person name="Warren T."/>
            <person name="Whitehead S."/>
            <person name="Woodward J.R."/>
            <person name="Volckaert G."/>
            <person name="Aert R."/>
            <person name="Robben J."/>
            <person name="Grymonprez B."/>
            <person name="Weltjens I."/>
            <person name="Vanstreels E."/>
            <person name="Rieger M."/>
            <person name="Schaefer M."/>
            <person name="Mueller-Auer S."/>
            <person name="Gabel C."/>
            <person name="Fuchs M."/>
            <person name="Duesterhoeft A."/>
            <person name="Fritzc C."/>
            <person name="Holzer E."/>
            <person name="Moestl D."/>
            <person name="Hilbert H."/>
            <person name="Borzym K."/>
            <person name="Langer I."/>
            <person name="Beck A."/>
            <person name="Lehrach H."/>
            <person name="Reinhardt R."/>
            <person name="Pohl T.M."/>
            <person name="Eger P."/>
            <person name="Zimmermann W."/>
            <person name="Wedler H."/>
            <person name="Wambutt R."/>
            <person name="Purnelle B."/>
            <person name="Goffeau A."/>
            <person name="Cadieu E."/>
            <person name="Dreano S."/>
            <person name="Gloux S."/>
            <person name="Lelaure V."/>
            <person name="Mottier S."/>
            <person name="Galibert F."/>
            <person name="Aves S.J."/>
            <person name="Xiang Z."/>
            <person name="Hunt C."/>
            <person name="Moore K."/>
            <person name="Hurst S.M."/>
            <person name="Lucas M."/>
            <person name="Rochet M."/>
            <person name="Gaillardin C."/>
            <person name="Tallada V.A."/>
            <person name="Garzon A."/>
            <person name="Thode G."/>
            <person name="Daga R.R."/>
            <person name="Cruzado L."/>
            <person name="Jimenez J."/>
            <person name="Sanchez M."/>
            <person name="del Rey F."/>
            <person name="Benito J."/>
            <person name="Dominguez A."/>
            <person name="Revuelta J.L."/>
            <person name="Moreno S."/>
            <person name="Armstrong J."/>
            <person name="Forsburg S.L."/>
            <person name="Cerutti L."/>
            <person name="Lowe T."/>
            <person name="McCombie W.R."/>
            <person name="Paulsen I."/>
            <person name="Potashkin J."/>
            <person name="Shpakovski G.V."/>
            <person name="Ussery D."/>
            <person name="Barrell B.G."/>
            <person name="Nurse P."/>
        </authorList>
    </citation>
    <scope>NUCLEOTIDE SEQUENCE [LARGE SCALE GENOMIC DNA]</scope>
    <source>
        <strain>972 / ATCC 24843</strain>
    </source>
</reference>
<reference key="2">
    <citation type="journal article" date="2006" name="Nat. Biotechnol.">
        <title>ORFeome cloning and global analysis of protein localization in the fission yeast Schizosaccharomyces pombe.</title>
        <authorList>
            <person name="Matsuyama A."/>
            <person name="Arai R."/>
            <person name="Yashiroda Y."/>
            <person name="Shirai A."/>
            <person name="Kamata A."/>
            <person name="Sekido S."/>
            <person name="Kobayashi Y."/>
            <person name="Hashimoto A."/>
            <person name="Hamamoto M."/>
            <person name="Hiraoka Y."/>
            <person name="Horinouchi S."/>
            <person name="Yoshida M."/>
        </authorList>
    </citation>
    <scope>SUBCELLULAR LOCATION [LARGE SCALE ANALYSIS]</scope>
</reference>
<evidence type="ECO:0000255" key="1">
    <source>
        <dbReference type="PROSITE-ProRule" id="PRU00175"/>
    </source>
</evidence>
<evidence type="ECO:0000255" key="2">
    <source>
        <dbReference type="PROSITE-ProRule" id="PRU00541"/>
    </source>
</evidence>
<evidence type="ECO:0000255" key="3">
    <source>
        <dbReference type="PROSITE-ProRule" id="PRU00542"/>
    </source>
</evidence>
<evidence type="ECO:0000269" key="4">
    <source>
    </source>
</evidence>
<evidence type="ECO:0000305" key="5"/>
<protein>
    <recommendedName>
        <fullName>Uncharacterized ATP-dependent helicase C144.05</fullName>
        <ecNumber>3.6.4.-</ecNumber>
    </recommendedName>
</protein>
<gene>
    <name type="ORF">SPAC144.05</name>
</gene>
<dbReference type="EC" id="3.6.4.-"/>
<dbReference type="EMBL" id="CU329670">
    <property type="protein sequence ID" value="CAB59685.1"/>
    <property type="molecule type" value="Genomic_DNA"/>
</dbReference>
<dbReference type="PIR" id="T37672">
    <property type="entry name" value="T37672"/>
</dbReference>
<dbReference type="RefSeq" id="NP_594666.1">
    <property type="nucleotide sequence ID" value="NM_001020095.2"/>
</dbReference>
<dbReference type="BioGRID" id="279346">
    <property type="interactions" value="44"/>
</dbReference>
<dbReference type="FunCoup" id="Q9UTL9">
    <property type="interactions" value="474"/>
</dbReference>
<dbReference type="STRING" id="284812.Q9UTL9"/>
<dbReference type="iPTMnet" id="Q9UTL9"/>
<dbReference type="PaxDb" id="4896-SPAC144.05.1"/>
<dbReference type="EnsemblFungi" id="SPAC144.05.1">
    <property type="protein sequence ID" value="SPAC144.05.1:pep"/>
    <property type="gene ID" value="SPAC144.05"/>
</dbReference>
<dbReference type="PomBase" id="SPAC144.05"/>
<dbReference type="VEuPathDB" id="FungiDB:SPAC144.05"/>
<dbReference type="eggNOG" id="KOG0298">
    <property type="taxonomic scope" value="Eukaryota"/>
</dbReference>
<dbReference type="HOGENOM" id="CLU_001592_2_0_1"/>
<dbReference type="InParanoid" id="Q9UTL9"/>
<dbReference type="OMA" id="KAVFFCA"/>
<dbReference type="PhylomeDB" id="Q9UTL9"/>
<dbReference type="Reactome" id="R-SPO-8866654">
    <property type="pathway name" value="E3 ubiquitin ligases ubiquitinate target proteins"/>
</dbReference>
<dbReference type="PRO" id="PR:Q9UTL9"/>
<dbReference type="Proteomes" id="UP000002485">
    <property type="component" value="Chromosome I"/>
</dbReference>
<dbReference type="GO" id="GO:0000785">
    <property type="term" value="C:chromatin"/>
    <property type="evidence" value="ECO:0000305"/>
    <property type="project" value="PomBase"/>
</dbReference>
<dbReference type="GO" id="GO:0005634">
    <property type="term" value="C:nucleus"/>
    <property type="evidence" value="ECO:0007005"/>
    <property type="project" value="PomBase"/>
</dbReference>
<dbReference type="GO" id="GO:0005524">
    <property type="term" value="F:ATP binding"/>
    <property type="evidence" value="ECO:0007669"/>
    <property type="project" value="UniProtKB-KW"/>
</dbReference>
<dbReference type="GO" id="GO:0016887">
    <property type="term" value="F:ATP hydrolysis activity"/>
    <property type="evidence" value="ECO:0000305"/>
    <property type="project" value="PomBase"/>
</dbReference>
<dbReference type="GO" id="GO:0008094">
    <property type="term" value="F:ATP-dependent activity, acting on DNA"/>
    <property type="evidence" value="ECO:0000255"/>
    <property type="project" value="PomBase"/>
</dbReference>
<dbReference type="GO" id="GO:0004386">
    <property type="term" value="F:helicase activity"/>
    <property type="evidence" value="ECO:0007669"/>
    <property type="project" value="UniProtKB-KW"/>
</dbReference>
<dbReference type="GO" id="GO:0061630">
    <property type="term" value="F:ubiquitin protein ligase activity"/>
    <property type="evidence" value="ECO:0000318"/>
    <property type="project" value="GO_Central"/>
</dbReference>
<dbReference type="GO" id="GO:0008270">
    <property type="term" value="F:zinc ion binding"/>
    <property type="evidence" value="ECO:0000255"/>
    <property type="project" value="PomBase"/>
</dbReference>
<dbReference type="GO" id="GO:0006974">
    <property type="term" value="P:DNA damage response"/>
    <property type="evidence" value="ECO:0000318"/>
    <property type="project" value="GO_Central"/>
</dbReference>
<dbReference type="GO" id="GO:0006281">
    <property type="term" value="P:DNA repair"/>
    <property type="evidence" value="ECO:0000250"/>
    <property type="project" value="PomBase"/>
</dbReference>
<dbReference type="GO" id="GO:0000209">
    <property type="term" value="P:protein polyubiquitination"/>
    <property type="evidence" value="ECO:0000318"/>
    <property type="project" value="GO_Central"/>
</dbReference>
<dbReference type="CDD" id="cd18070">
    <property type="entry name" value="DEXQc_SHPRH"/>
    <property type="match status" value="1"/>
</dbReference>
<dbReference type="CDD" id="cd16568">
    <property type="entry name" value="RING-HC_ScPSH1-like"/>
    <property type="match status" value="1"/>
</dbReference>
<dbReference type="CDD" id="cd18793">
    <property type="entry name" value="SF2_C_SNF"/>
    <property type="match status" value="1"/>
</dbReference>
<dbReference type="FunFam" id="3.40.50.10810:FF:000059">
    <property type="entry name" value="SNF2 family helicase/ATPase, putative"/>
    <property type="match status" value="1"/>
</dbReference>
<dbReference type="Gene3D" id="3.40.50.300">
    <property type="entry name" value="P-loop containing nucleotide triphosphate hydrolases"/>
    <property type="match status" value="1"/>
</dbReference>
<dbReference type="Gene3D" id="3.40.50.10810">
    <property type="entry name" value="Tandem AAA-ATPase domain"/>
    <property type="match status" value="1"/>
</dbReference>
<dbReference type="Gene3D" id="3.30.40.10">
    <property type="entry name" value="Zinc/RING finger domain, C3HC4 (zinc finger)"/>
    <property type="match status" value="1"/>
</dbReference>
<dbReference type="InterPro" id="IPR052583">
    <property type="entry name" value="ATP-helicase/E3_Ub-Ligase"/>
</dbReference>
<dbReference type="InterPro" id="IPR014001">
    <property type="entry name" value="Helicase_ATP-bd"/>
</dbReference>
<dbReference type="InterPro" id="IPR001650">
    <property type="entry name" value="Helicase_C-like"/>
</dbReference>
<dbReference type="InterPro" id="IPR027417">
    <property type="entry name" value="P-loop_NTPase"/>
</dbReference>
<dbReference type="InterPro" id="IPR038718">
    <property type="entry name" value="SNF2-like_sf"/>
</dbReference>
<dbReference type="InterPro" id="IPR049730">
    <property type="entry name" value="SNF2/RAD54-like_C"/>
</dbReference>
<dbReference type="InterPro" id="IPR000330">
    <property type="entry name" value="SNF2_N"/>
</dbReference>
<dbReference type="InterPro" id="IPR018957">
    <property type="entry name" value="Znf_C3HC4_RING-type"/>
</dbReference>
<dbReference type="InterPro" id="IPR001841">
    <property type="entry name" value="Znf_RING"/>
</dbReference>
<dbReference type="InterPro" id="IPR013083">
    <property type="entry name" value="Znf_RING/FYVE/PHD"/>
</dbReference>
<dbReference type="InterPro" id="IPR017907">
    <property type="entry name" value="Znf_RING_CS"/>
</dbReference>
<dbReference type="PANTHER" id="PTHR45865:SF1">
    <property type="entry name" value="E3 UBIQUITIN-PROTEIN LIGASE SHPRH"/>
    <property type="match status" value="1"/>
</dbReference>
<dbReference type="PANTHER" id="PTHR45865">
    <property type="entry name" value="E3 UBIQUITIN-PROTEIN LIGASE SHPRH FAMILY MEMBER"/>
    <property type="match status" value="1"/>
</dbReference>
<dbReference type="Pfam" id="PF00271">
    <property type="entry name" value="Helicase_C"/>
    <property type="match status" value="1"/>
</dbReference>
<dbReference type="Pfam" id="PF00176">
    <property type="entry name" value="SNF2-rel_dom"/>
    <property type="match status" value="1"/>
</dbReference>
<dbReference type="Pfam" id="PF00097">
    <property type="entry name" value="zf-C3HC4"/>
    <property type="match status" value="1"/>
</dbReference>
<dbReference type="SMART" id="SM00487">
    <property type="entry name" value="DEXDc"/>
    <property type="match status" value="1"/>
</dbReference>
<dbReference type="SMART" id="SM00490">
    <property type="entry name" value="HELICc"/>
    <property type="match status" value="1"/>
</dbReference>
<dbReference type="SMART" id="SM00184">
    <property type="entry name" value="RING"/>
    <property type="match status" value="1"/>
</dbReference>
<dbReference type="SUPFAM" id="SSF52540">
    <property type="entry name" value="P-loop containing nucleoside triphosphate hydrolases"/>
    <property type="match status" value="2"/>
</dbReference>
<dbReference type="SUPFAM" id="SSF57850">
    <property type="entry name" value="RING/U-box"/>
    <property type="match status" value="1"/>
</dbReference>
<dbReference type="PROSITE" id="PS51192">
    <property type="entry name" value="HELICASE_ATP_BIND_1"/>
    <property type="match status" value="1"/>
</dbReference>
<dbReference type="PROSITE" id="PS51194">
    <property type="entry name" value="HELICASE_CTER"/>
    <property type="match status" value="1"/>
</dbReference>
<dbReference type="PROSITE" id="PS00518">
    <property type="entry name" value="ZF_RING_1"/>
    <property type="match status" value="1"/>
</dbReference>
<dbReference type="PROSITE" id="PS50089">
    <property type="entry name" value="ZF_RING_2"/>
    <property type="match status" value="1"/>
</dbReference>
<comment type="subcellular location">
    <subcellularLocation>
        <location evidence="4">Nucleus</location>
    </subcellularLocation>
</comment>
<comment type="similarity">
    <text evidence="5">Belongs to the SNF2/RAD54 helicase family.</text>
</comment>